<evidence type="ECO:0000250" key="1">
    <source>
        <dbReference type="UniProtKB" id="J7M799"/>
    </source>
</evidence>
<evidence type="ECO:0000255" key="2"/>
<evidence type="ECO:0000256" key="3">
    <source>
        <dbReference type="SAM" id="MobiDB-lite"/>
    </source>
</evidence>
<evidence type="ECO:0000269" key="4">
    <source>
    </source>
</evidence>
<evidence type="ECO:0000269" key="5">
    <source>
    </source>
</evidence>
<evidence type="ECO:0000303" key="6">
    <source>
    </source>
</evidence>
<evidence type="ECO:0000305" key="7"/>
<evidence type="ECO:0000305" key="8">
    <source>
    </source>
</evidence>
<evidence type="ECO:0000305" key="9">
    <source>
    </source>
</evidence>
<keyword id="KW-0175">Coiled coil</keyword>
<keyword id="KW-0963">Cytoplasm</keyword>
<keyword id="KW-0677">Repeat</keyword>
<keyword id="KW-0346">Stress response</keyword>
<feature type="chain" id="PRO_0000440198" description="Cytosolic-abundant heat soluble protein 107838">
    <location>
        <begin position="1"/>
        <end position="229"/>
    </location>
</feature>
<feature type="region of interest" description="Disordered" evidence="3">
    <location>
        <begin position="1"/>
        <end position="29"/>
    </location>
</feature>
<feature type="region of interest" description="CAHS motif 1" evidence="1">
    <location>
        <begin position="124"/>
        <end position="142"/>
    </location>
</feature>
<feature type="region of interest" description="CAHS motif 2" evidence="1">
    <location>
        <begin position="161"/>
        <end position="179"/>
    </location>
</feature>
<feature type="region of interest" description="Disordered" evidence="3">
    <location>
        <begin position="202"/>
        <end position="229"/>
    </location>
</feature>
<feature type="coiled-coil region" evidence="2">
    <location>
        <begin position="109"/>
        <end position="145"/>
    </location>
</feature>
<feature type="compositionally biased region" description="Polar residues" evidence="3">
    <location>
        <begin position="202"/>
        <end position="218"/>
    </location>
</feature>
<feature type="compositionally biased region" description="Basic and acidic residues" evidence="3">
    <location>
        <begin position="219"/>
        <end position="229"/>
    </location>
</feature>
<gene>
    <name evidence="6" type="primary">CAHS 107838</name>
</gene>
<protein>
    <recommendedName>
        <fullName evidence="6">Cytosolic-abundant heat soluble protein 107838</fullName>
        <shortName evidence="6">CAHS 107838</shortName>
    </recommendedName>
    <alternativeName>
        <fullName evidence="6">Tardigrade-specific intrinsically disordered protein CAHS 107838</fullName>
        <shortName evidence="6">TDP CAHS 107838</shortName>
    </alternativeName>
</protein>
<sequence>MSAEAMNMNMNQDAVFIPPPEGEQYERKEKQEIQQTSYLQSQVKVPLVNLPAPFFSTSFSAQEILGEGFQASISRISAVSEELSSIEIPELAEEARRDFAAKTREQEMLSANYQKEVERKTEAYRKQQEVEADKIRKELEKQHLRDVEFRKDIVEMAIENQKKMIDVESRYAKKDMDRERVKVRMMLEQQKFHSDIQVNLDSSAAGTETGGQVVSESQKFTERNRQIKQ</sequence>
<organism>
    <name type="scientific">Paramacrobiotus richtersi</name>
    <name type="common">Water bear</name>
    <name type="synonym">Macrobiotus richtersi</name>
    <dbReference type="NCBI Taxonomy" id="697321"/>
    <lineage>
        <taxon>Eukaryota</taxon>
        <taxon>Metazoa</taxon>
        <taxon>Ecdysozoa</taxon>
        <taxon>Tardigrada</taxon>
        <taxon>Eutardigrada</taxon>
        <taxon>Parachela</taxon>
        <taxon>Macrobiotoidea</taxon>
        <taxon>Macrobiotidae</taxon>
        <taxon>Paramacrobiotus</taxon>
        <taxon>Paramacrobiotus richtersi group</taxon>
    </lineage>
</organism>
<accession>P0CU51</accession>
<proteinExistence type="inferred from homology"/>
<dbReference type="SMR" id="P0CU51"/>
<dbReference type="GO" id="GO:0005737">
    <property type="term" value="C:cytoplasm"/>
    <property type="evidence" value="ECO:0007669"/>
    <property type="project" value="UniProtKB-SubCell"/>
</dbReference>
<dbReference type="GO" id="GO:0009269">
    <property type="term" value="P:response to desiccation"/>
    <property type="evidence" value="ECO:0000315"/>
    <property type="project" value="DisProt"/>
</dbReference>
<dbReference type="DisProt" id="DP01383"/>
<name>CAHS1_PARRC</name>
<comment type="function">
    <text evidence="4 5 9">CAHS proteins are cytosolic heat soluble proteins that seem to contribute to the anhydrobiosis in tardigrades, but their specific mechanisms are yet to be identified (PubMed:28306513, PubMed:33545053). It is possible that protection during anhydrobiosis might occur via the stabilization of vitrifying small molecules such as sugars, but not via the direct glass transition of CAHS proteins themselves (Probable).</text>
</comment>
<comment type="subcellular location">
    <subcellularLocation>
        <location evidence="8">Cytoplasm</location>
    </subcellularLocation>
</comment>
<comment type="domain">
    <text evidence="1">CAHS proteins contain 2 repeats of 19-mer peptides designated as CAHS-motifs that comprise each two octapeptides connected by a tripeptide (By similarity).</text>
</comment>
<comment type="miscellaneous">
    <text evidence="4">Trehalose, a disaccharide essential for several organisms to survive drying, is detected at low levels or not at all in some tardigrade species, indicating that tardigrades possess potentially novel mechanisms for surviving desiccation involving tardigrade-specific intrinsically disordered proteins (TDPs) (PubMed:28306513).</text>
</comment>
<comment type="similarity">
    <text evidence="7">Belongs to the Cytosolic-abundant heat soluble protein (CAHS) family.</text>
</comment>
<comment type="caution">
    <text evidence="4 5">It was suggested that CAHS proteins were intrinsically unstructured and show heat-dependent glass transition, which contributes to the vitrification of cells, and this further leads to desiccation tolerance (PubMed:28306513). However, more recent studies led to the conclusion that there was no evidence supporting glass transition of CAHS proteins to be contributing to the glass transition of the whole tardigrade (PubMed:33545053).</text>
</comment>
<reference key="1">
    <citation type="journal article" date="2017" name="Mol. Cell">
        <title>Tardigrades use intrinsically disordered proteins to survive desiccation.</title>
        <authorList>
            <person name="Boothby T.C."/>
            <person name="Tapia H."/>
            <person name="Brozena A.H."/>
            <person name="Piszkiewicz S."/>
            <person name="Smith A.E."/>
            <person name="Giovannini I."/>
            <person name="Rebecchi L."/>
            <person name="Pielak G.J."/>
            <person name="Koshland D."/>
            <person name="Goldstein B."/>
        </authorList>
    </citation>
    <scope>FUNCTION</scope>
</reference>
<reference key="2">
    <citation type="journal article" date="2021" name="Mol. Cell">
        <title>Reconsidering the 'glass transition' hypothesis of intrinsically unstructured CAHS proteins in desiccation tolerance of tardigrades.</title>
        <authorList>
            <person name="Arakawa K."/>
            <person name="Numata K."/>
        </authorList>
    </citation>
    <scope>FUNCTION</scope>
</reference>